<gene>
    <name evidence="1" type="primary">pheS</name>
    <name type="ordered locus">Mmwyl1_2593</name>
</gene>
<dbReference type="EC" id="6.1.1.20" evidence="1"/>
<dbReference type="EMBL" id="CP000749">
    <property type="protein sequence ID" value="ABR71506.1"/>
    <property type="molecule type" value="Genomic_DNA"/>
</dbReference>
<dbReference type="SMR" id="A6VYH7"/>
<dbReference type="STRING" id="400668.Mmwyl1_2593"/>
<dbReference type="KEGG" id="mmw:Mmwyl1_2593"/>
<dbReference type="eggNOG" id="COG0016">
    <property type="taxonomic scope" value="Bacteria"/>
</dbReference>
<dbReference type="HOGENOM" id="CLU_025086_0_1_6"/>
<dbReference type="OrthoDB" id="9800719at2"/>
<dbReference type="GO" id="GO:0005737">
    <property type="term" value="C:cytoplasm"/>
    <property type="evidence" value="ECO:0007669"/>
    <property type="project" value="UniProtKB-SubCell"/>
</dbReference>
<dbReference type="GO" id="GO:0005524">
    <property type="term" value="F:ATP binding"/>
    <property type="evidence" value="ECO:0007669"/>
    <property type="project" value="UniProtKB-UniRule"/>
</dbReference>
<dbReference type="GO" id="GO:0000287">
    <property type="term" value="F:magnesium ion binding"/>
    <property type="evidence" value="ECO:0007669"/>
    <property type="project" value="UniProtKB-UniRule"/>
</dbReference>
<dbReference type="GO" id="GO:0004826">
    <property type="term" value="F:phenylalanine-tRNA ligase activity"/>
    <property type="evidence" value="ECO:0007669"/>
    <property type="project" value="UniProtKB-UniRule"/>
</dbReference>
<dbReference type="GO" id="GO:0000049">
    <property type="term" value="F:tRNA binding"/>
    <property type="evidence" value="ECO:0007669"/>
    <property type="project" value="InterPro"/>
</dbReference>
<dbReference type="GO" id="GO:0006432">
    <property type="term" value="P:phenylalanyl-tRNA aminoacylation"/>
    <property type="evidence" value="ECO:0007669"/>
    <property type="project" value="UniProtKB-UniRule"/>
</dbReference>
<dbReference type="CDD" id="cd00496">
    <property type="entry name" value="PheRS_alpha_core"/>
    <property type="match status" value="1"/>
</dbReference>
<dbReference type="FunFam" id="3.30.930.10:FF:000003">
    <property type="entry name" value="Phenylalanine--tRNA ligase alpha subunit"/>
    <property type="match status" value="1"/>
</dbReference>
<dbReference type="Gene3D" id="3.30.930.10">
    <property type="entry name" value="Bira Bifunctional Protein, Domain 2"/>
    <property type="match status" value="1"/>
</dbReference>
<dbReference type="HAMAP" id="MF_00281">
    <property type="entry name" value="Phe_tRNA_synth_alpha1"/>
    <property type="match status" value="1"/>
</dbReference>
<dbReference type="InterPro" id="IPR006195">
    <property type="entry name" value="aa-tRNA-synth_II"/>
</dbReference>
<dbReference type="InterPro" id="IPR045864">
    <property type="entry name" value="aa-tRNA-synth_II/BPL/LPL"/>
</dbReference>
<dbReference type="InterPro" id="IPR004529">
    <property type="entry name" value="Phe-tRNA-synth_IIc_asu"/>
</dbReference>
<dbReference type="InterPro" id="IPR004188">
    <property type="entry name" value="Phe-tRNA_ligase_II_N"/>
</dbReference>
<dbReference type="InterPro" id="IPR022911">
    <property type="entry name" value="Phe_tRNA_ligase_alpha1_bac"/>
</dbReference>
<dbReference type="InterPro" id="IPR002319">
    <property type="entry name" value="Phenylalanyl-tRNA_Synthase"/>
</dbReference>
<dbReference type="InterPro" id="IPR010978">
    <property type="entry name" value="tRNA-bd_arm"/>
</dbReference>
<dbReference type="NCBIfam" id="TIGR00468">
    <property type="entry name" value="pheS"/>
    <property type="match status" value="1"/>
</dbReference>
<dbReference type="PANTHER" id="PTHR11538:SF41">
    <property type="entry name" value="PHENYLALANINE--TRNA LIGASE, MITOCHONDRIAL"/>
    <property type="match status" value="1"/>
</dbReference>
<dbReference type="PANTHER" id="PTHR11538">
    <property type="entry name" value="PHENYLALANYL-TRNA SYNTHETASE"/>
    <property type="match status" value="1"/>
</dbReference>
<dbReference type="Pfam" id="PF02912">
    <property type="entry name" value="Phe_tRNA-synt_N"/>
    <property type="match status" value="1"/>
</dbReference>
<dbReference type="Pfam" id="PF01409">
    <property type="entry name" value="tRNA-synt_2d"/>
    <property type="match status" value="1"/>
</dbReference>
<dbReference type="SUPFAM" id="SSF55681">
    <property type="entry name" value="Class II aaRS and biotin synthetases"/>
    <property type="match status" value="1"/>
</dbReference>
<dbReference type="SUPFAM" id="SSF46589">
    <property type="entry name" value="tRNA-binding arm"/>
    <property type="match status" value="1"/>
</dbReference>
<dbReference type="PROSITE" id="PS50862">
    <property type="entry name" value="AA_TRNA_LIGASE_II"/>
    <property type="match status" value="1"/>
</dbReference>
<feature type="chain" id="PRO_1000078843" description="Phenylalanine--tRNA ligase alpha subunit">
    <location>
        <begin position="1"/>
        <end position="331"/>
    </location>
</feature>
<feature type="binding site" evidence="1">
    <location>
        <position position="252"/>
    </location>
    <ligand>
        <name>Mg(2+)</name>
        <dbReference type="ChEBI" id="CHEBI:18420"/>
        <note>shared with beta subunit</note>
    </ligand>
</feature>
<protein>
    <recommendedName>
        <fullName evidence="1">Phenylalanine--tRNA ligase alpha subunit</fullName>
        <ecNumber evidence="1">6.1.1.20</ecNumber>
    </recommendedName>
    <alternativeName>
        <fullName evidence="1">Phenylalanyl-tRNA synthetase alpha subunit</fullName>
        <shortName evidence="1">PheRS</shortName>
    </alternativeName>
</protein>
<comment type="catalytic activity">
    <reaction evidence="1">
        <text>tRNA(Phe) + L-phenylalanine + ATP = L-phenylalanyl-tRNA(Phe) + AMP + diphosphate + H(+)</text>
        <dbReference type="Rhea" id="RHEA:19413"/>
        <dbReference type="Rhea" id="RHEA-COMP:9668"/>
        <dbReference type="Rhea" id="RHEA-COMP:9699"/>
        <dbReference type="ChEBI" id="CHEBI:15378"/>
        <dbReference type="ChEBI" id="CHEBI:30616"/>
        <dbReference type="ChEBI" id="CHEBI:33019"/>
        <dbReference type="ChEBI" id="CHEBI:58095"/>
        <dbReference type="ChEBI" id="CHEBI:78442"/>
        <dbReference type="ChEBI" id="CHEBI:78531"/>
        <dbReference type="ChEBI" id="CHEBI:456215"/>
        <dbReference type="EC" id="6.1.1.20"/>
    </reaction>
</comment>
<comment type="cofactor">
    <cofactor evidence="1">
        <name>Mg(2+)</name>
        <dbReference type="ChEBI" id="CHEBI:18420"/>
    </cofactor>
    <text evidence="1">Binds 2 magnesium ions per tetramer.</text>
</comment>
<comment type="subunit">
    <text evidence="1">Tetramer of two alpha and two beta subunits.</text>
</comment>
<comment type="subcellular location">
    <subcellularLocation>
        <location evidence="1">Cytoplasm</location>
    </subcellularLocation>
</comment>
<comment type="similarity">
    <text evidence="1">Belongs to the class-II aminoacyl-tRNA synthetase family. Phe-tRNA synthetase alpha subunit type 1 subfamily.</text>
</comment>
<accession>A6VYH7</accession>
<reference key="1">
    <citation type="submission" date="2007-06" db="EMBL/GenBank/DDBJ databases">
        <title>Complete sequence of Marinomonas sp. MWYL1.</title>
        <authorList>
            <consortium name="US DOE Joint Genome Institute"/>
            <person name="Copeland A."/>
            <person name="Lucas S."/>
            <person name="Lapidus A."/>
            <person name="Barry K."/>
            <person name="Glavina del Rio T."/>
            <person name="Dalin E."/>
            <person name="Tice H."/>
            <person name="Pitluck S."/>
            <person name="Kiss H."/>
            <person name="Brettin T."/>
            <person name="Bruce D."/>
            <person name="Detter J.C."/>
            <person name="Han C."/>
            <person name="Schmutz J."/>
            <person name="Larimer F."/>
            <person name="Land M."/>
            <person name="Hauser L."/>
            <person name="Kyrpides N."/>
            <person name="Kim E."/>
            <person name="Johnston A.W.B."/>
            <person name="Todd J.D."/>
            <person name="Rogers R."/>
            <person name="Wexler M."/>
            <person name="Bond P.L."/>
            <person name="Li Y."/>
            <person name="Richardson P."/>
        </authorList>
    </citation>
    <scope>NUCLEOTIDE SEQUENCE [LARGE SCALE GENOMIC DNA]</scope>
    <source>
        <strain>MWYL1</strain>
    </source>
</reference>
<sequence length="331" mass="37381">MENLKQILADALSAVAASESESALDDVRVHYLGKKGALTALLKQLGNVSAEDRPKFGQMVNEAKDQVQEKITERKASLAKAALDAKLATETIDISLSGKGQEVGGLHPVTRTMERIETFFRGIGFDVASGPEIEDDYHNFEALNIPAHHPARAMQDTFYFNPSTVLRTHTSPVQVRTMETTQPPIRIICPGRVYRCDSDQTHTPMFHQVEGLLIDENISFADLKGILQQFLNVFFEDDLKVRFRPSYFPFTEPSIEVDIMRTNSKGEESWLEVLGCGMVHPKVLEMSGIDSEKYTGFAFGMGVERFAMLRYKVDDLRMFFENDLRFLKQFK</sequence>
<organism>
    <name type="scientific">Marinomonas sp. (strain MWYL1)</name>
    <dbReference type="NCBI Taxonomy" id="400668"/>
    <lineage>
        <taxon>Bacteria</taxon>
        <taxon>Pseudomonadati</taxon>
        <taxon>Pseudomonadota</taxon>
        <taxon>Gammaproteobacteria</taxon>
        <taxon>Oceanospirillales</taxon>
        <taxon>Oceanospirillaceae</taxon>
        <taxon>Marinomonas</taxon>
    </lineage>
</organism>
<evidence type="ECO:0000255" key="1">
    <source>
        <dbReference type="HAMAP-Rule" id="MF_00281"/>
    </source>
</evidence>
<name>SYFA_MARMS</name>
<keyword id="KW-0030">Aminoacyl-tRNA synthetase</keyword>
<keyword id="KW-0067">ATP-binding</keyword>
<keyword id="KW-0963">Cytoplasm</keyword>
<keyword id="KW-0436">Ligase</keyword>
<keyword id="KW-0460">Magnesium</keyword>
<keyword id="KW-0479">Metal-binding</keyword>
<keyword id="KW-0547">Nucleotide-binding</keyword>
<keyword id="KW-0648">Protein biosynthesis</keyword>
<proteinExistence type="inferred from homology"/>